<proteinExistence type="evidence at protein level"/>
<reference key="1">
    <citation type="journal article" date="1990" name="Science">
        <title>Identification of a specialized adenylyl cyclase that may mediate odorant detection.</title>
        <authorList>
            <person name="Bakalyar H.A."/>
            <person name="Reed R.R."/>
        </authorList>
    </citation>
    <scope>NUCLEOTIDE SEQUENCE [MRNA]</scope>
    <scope>FUNCTION</scope>
    <scope>CATALYTIC ACTIVITY</scope>
    <scope>COFACTOR</scope>
    <scope>ACTIVITY REGULATION</scope>
    <scope>TISSUE SPECIFICITY</scope>
    <scope>SUBCELLULAR LOCATION</scope>
    <source>
        <tissue>Olfactory epithelium</tissue>
    </source>
</reference>
<reference key="2">
    <citation type="journal article" date="1992" name="Biochemistry">
        <title>Stimulation of the type III olfactory adenylyl cyclase by calcium and calmodulin.</title>
        <authorList>
            <person name="Choi E.J."/>
            <person name="Xia Z."/>
            <person name="Storm D.R."/>
        </authorList>
    </citation>
    <scope>CATALYTIC ACTIVITY</scope>
    <scope>FUNCTION</scope>
    <scope>ACTIVITY REGULATION</scope>
    <scope>SUBCELLULAR LOCATION</scope>
</reference>
<reference key="3">
    <citation type="journal article" date="2005" name="Mol. Endocrinol.">
        <title>Inactivation of the mouse adenylyl cyclase 3 gene disrupts male fertility and spermatozoon function.</title>
        <authorList>
            <person name="Livera G."/>
            <person name="Xie F."/>
            <person name="Garcia M.A."/>
            <person name="Jaiswal B."/>
            <person name="Chen J."/>
            <person name="Law E."/>
            <person name="Storm D.R."/>
            <person name="Conti M."/>
        </authorList>
    </citation>
    <scope>SUBCELLULAR LOCATION</scope>
</reference>
<reference key="4">
    <citation type="journal article" date="2014" name="Naunyn Schmiedebergs Arch. Pharmacol.">
        <title>Non-raft adenylyl cyclase 2 defines a cAMP signaling compartment that selectively regulates IL-6 expression in airway smooth muscle cells: differential regulation of gene expression by AC isoforms.</title>
        <authorList>
            <person name="Bogard A.S."/>
            <person name="Birg A.V."/>
            <person name="Ostrom R.S."/>
        </authorList>
    </citation>
    <scope>CATALYTIC ACTIVITY</scope>
    <scope>FUNCTION</scope>
    <scope>ACTIVITY REGULATION</scope>
</reference>
<reference key="5">
    <citation type="journal article" date="2015" name="J. Cell Sci.">
        <title>SUMOylation regulates ciliary localization of olfactory signaling proteins.</title>
        <authorList>
            <person name="McIntyre J.C."/>
            <person name="Joiner A.M."/>
            <person name="Zhang L."/>
            <person name="Iniguez-Lluhi J."/>
            <person name="Martens J.R."/>
        </authorList>
    </citation>
    <scope>SUMOYLATION</scope>
    <scope>MUTAGENESIS OF LYS-465</scope>
    <scope>SUBCELLULAR LOCATION</scope>
    <scope>TISSUE SPECIFICITY</scope>
</reference>
<accession>P21932</accession>
<feature type="chain" id="PRO_0000195689" description="Adenylate cyclase type 3">
    <location>
        <begin position="1"/>
        <end position="1144"/>
    </location>
</feature>
<feature type="topological domain" description="Cytoplasmic" evidence="5">
    <location>
        <begin position="1"/>
        <end position="79"/>
    </location>
</feature>
<feature type="transmembrane region" description="Helical" evidence="5">
    <location>
        <begin position="80"/>
        <end position="100"/>
    </location>
</feature>
<feature type="transmembrane region" description="Helical" evidence="5">
    <location>
        <begin position="105"/>
        <end position="125"/>
    </location>
</feature>
<feature type="transmembrane region" description="Helical" evidence="5">
    <location>
        <begin position="139"/>
        <end position="159"/>
    </location>
</feature>
<feature type="transmembrane region" description="Helical" evidence="5">
    <location>
        <begin position="173"/>
        <end position="193"/>
    </location>
</feature>
<feature type="transmembrane region" description="Helical" evidence="5">
    <location>
        <begin position="226"/>
        <end position="246"/>
    </location>
</feature>
<feature type="transmembrane region" description="Helical" evidence="5">
    <location>
        <begin position="381"/>
        <end position="401"/>
    </location>
</feature>
<feature type="topological domain" description="Cytoplasmic" evidence="5">
    <location>
        <begin position="402"/>
        <end position="630"/>
    </location>
</feature>
<feature type="transmembrane region" description="Helical" evidence="5">
    <location>
        <begin position="631"/>
        <end position="651"/>
    </location>
</feature>
<feature type="transmembrane region" description="Helical" evidence="5">
    <location>
        <begin position="662"/>
        <end position="682"/>
    </location>
</feature>
<feature type="transmembrane region" description="Helical" evidence="5">
    <location>
        <begin position="706"/>
        <end position="726"/>
    </location>
</feature>
<feature type="transmembrane region" description="Helical" evidence="5">
    <location>
        <begin position="755"/>
        <end position="775"/>
    </location>
</feature>
<feature type="transmembrane region" description="Helical" evidence="5">
    <location>
        <begin position="777"/>
        <end position="797"/>
    </location>
</feature>
<feature type="transmembrane region" description="Helical" evidence="5">
    <location>
        <begin position="833"/>
        <end position="853"/>
    </location>
</feature>
<feature type="topological domain" description="Cytoplasmic" evidence="5">
    <location>
        <begin position="854"/>
        <end position="1144"/>
    </location>
</feature>
<feature type="region of interest" description="Disordered" evidence="7">
    <location>
        <begin position="504"/>
        <end position="563"/>
    </location>
</feature>
<feature type="compositionally biased region" description="Low complexity" evidence="7">
    <location>
        <begin position="534"/>
        <end position="543"/>
    </location>
</feature>
<feature type="binding site" evidence="3">
    <location>
        <begin position="324"/>
        <end position="329"/>
    </location>
    <ligand>
        <name>ATP</name>
        <dbReference type="ChEBI" id="CHEBI:30616"/>
    </ligand>
</feature>
<feature type="binding site" evidence="6">
    <location>
        <position position="324"/>
    </location>
    <ligand>
        <name>Mg(2+)</name>
        <dbReference type="ChEBI" id="CHEBI:18420"/>
        <label>1</label>
        <note>catalytic</note>
    </ligand>
</feature>
<feature type="binding site" evidence="6">
    <location>
        <position position="324"/>
    </location>
    <ligand>
        <name>Mg(2+)</name>
        <dbReference type="ChEBI" id="CHEBI:18420"/>
        <label>2</label>
        <note>catalytic</note>
    </ligand>
</feature>
<feature type="binding site" evidence="6">
    <location>
        <position position="325"/>
    </location>
    <ligand>
        <name>Mg(2+)</name>
        <dbReference type="ChEBI" id="CHEBI:18420"/>
        <label>2</label>
        <note>catalytic</note>
    </ligand>
</feature>
<feature type="binding site" evidence="3">
    <location>
        <begin position="366"/>
        <end position="368"/>
    </location>
    <ligand>
        <name>ATP</name>
        <dbReference type="ChEBI" id="CHEBI:30616"/>
    </ligand>
</feature>
<feature type="binding site" evidence="6">
    <location>
        <position position="368"/>
    </location>
    <ligand>
        <name>Mg(2+)</name>
        <dbReference type="ChEBI" id="CHEBI:18420"/>
        <label>1</label>
        <note>catalytic</note>
    </ligand>
</feature>
<feature type="binding site" evidence="6">
    <location>
        <position position="368"/>
    </location>
    <ligand>
        <name>Mg(2+)</name>
        <dbReference type="ChEBI" id="CHEBI:18420"/>
        <label>2</label>
        <note>catalytic</note>
    </ligand>
</feature>
<feature type="binding site" evidence="3">
    <location>
        <position position="412"/>
    </location>
    <ligand>
        <name>ATP</name>
        <dbReference type="ChEBI" id="CHEBI:30616"/>
    </ligand>
</feature>
<feature type="binding site" evidence="2">
    <location>
        <position position="975"/>
    </location>
    <ligand>
        <name>ATP</name>
        <dbReference type="ChEBI" id="CHEBI:30616"/>
    </ligand>
</feature>
<feature type="binding site" evidence="2">
    <location>
        <begin position="1062"/>
        <end position="1064"/>
    </location>
    <ligand>
        <name>ATP</name>
        <dbReference type="ChEBI" id="CHEBI:30616"/>
    </ligand>
</feature>
<feature type="binding site" evidence="2">
    <location>
        <begin position="1069"/>
        <end position="1073"/>
    </location>
    <ligand>
        <name>ATP</name>
        <dbReference type="ChEBI" id="CHEBI:30616"/>
    </ligand>
</feature>
<feature type="binding site" evidence="2">
    <location>
        <position position="1109"/>
    </location>
    <ligand>
        <name>ATP</name>
        <dbReference type="ChEBI" id="CHEBI:30616"/>
    </ligand>
</feature>
<feature type="modified residue" description="Phosphoserine" evidence="1">
    <location>
        <position position="523"/>
    </location>
</feature>
<feature type="modified residue" description="Phosphoserine" evidence="4">
    <location>
        <position position="578"/>
    </location>
</feature>
<feature type="modified residue" description="Phosphoserine; by CaMK2" evidence="4">
    <location>
        <position position="1076"/>
    </location>
</feature>
<feature type="glycosylation site" description="N-linked (GlcNAc...) asparagine" evidence="5">
    <location>
        <position position="734"/>
    </location>
</feature>
<feature type="cross-link" description="Glycyl lysine isopeptide (Lys-Gly) (interchain with G-Cter in SUMO3)" evidence="12">
    <location>
        <position position="465"/>
    </location>
</feature>
<feature type="mutagenesis site" description="Abolishes sumoylation. Abolishes location at cilia in the olfactory epithelium." evidence="12">
    <original>K</original>
    <variation>R</variation>
    <location>
        <position position="465"/>
    </location>
</feature>
<comment type="function">
    <text evidence="4 9 10 11">Catalyzes the formation of the signaling molecule cAMP in response to G-protein signaling (PubMed:1633161, PubMed:2255909, PubMed:24363043). Participates in signaling cascades triggered by odorant receptors via its function in cAMP biosynthesis: specifically activated by G alpha protein GNAL/G(olf) in olfactory epithelium (PubMed:2255909). Required for the perception of odorants. Required for normal sperm motility and normal male fertility (By similarity). Plays a role in regulating insulin levels and body fat accumulation in response to a high fat diet (By similarity).</text>
</comment>
<comment type="catalytic activity">
    <reaction evidence="9 10 11">
        <text>ATP = 3',5'-cyclic AMP + diphosphate</text>
        <dbReference type="Rhea" id="RHEA:15389"/>
        <dbReference type="ChEBI" id="CHEBI:30616"/>
        <dbReference type="ChEBI" id="CHEBI:33019"/>
        <dbReference type="ChEBI" id="CHEBI:58165"/>
        <dbReference type="EC" id="4.6.1.1"/>
    </reaction>
</comment>
<comment type="cofactor">
    <cofactor evidence="10">
        <name>Mg(2+)</name>
        <dbReference type="ChEBI" id="CHEBI:18420"/>
    </cofactor>
    <cofactor evidence="3">
        <name>Mn(2+)</name>
        <dbReference type="ChEBI" id="CHEBI:29035"/>
    </cofactor>
    <text evidence="3">Binds 2 magnesium ions per subunit. Is also active with manganese (in vitro).</text>
</comment>
<comment type="activity regulation">
    <text evidence="9 10 11">Specifically activated by the G alpha protein GNAL/G(olf) in signaling cascades triggered by odorant receptors (PubMed:2255909). Activated by forskolin (PubMed:1633161, PubMed:2255909, PubMed:24363043). After forskolin treatment, activity is further increased by calcium/calmodulin (PubMed:1633161). In the absence of forskolin, calcium/calmodulin has little effect on enzyme activity (PubMed:1633161).</text>
</comment>
<comment type="subcellular location">
    <subcellularLocation>
        <location evidence="8 9">Cell membrane</location>
        <topology evidence="14">Multi-pass membrane protein</topology>
    </subcellularLocation>
    <subcellularLocation>
        <location evidence="8">Golgi apparatus</location>
    </subcellularLocation>
    <subcellularLocation>
        <location evidence="10 12">Cell projection</location>
        <location evidence="10 12">Cilium</location>
    </subcellularLocation>
    <subcellularLocation>
        <location evidence="1">Cytoplasm</location>
    </subcellularLocation>
</comment>
<comment type="tissue specificity">
    <text evidence="10">Detected on cilia on the olfactory epithelium (at protein level) (PubMed:2255909, PubMed:25908845). Detected on cilia on the olfactory epithelium.</text>
</comment>
<comment type="domain">
    <text evidence="3">The protein contains two modules with six transmembrane helices each; both are required for catalytic activity. Isolated N-terminal or C-terminal modules have no catalytic activity, but when they are brought together, enzyme activity is restored. The active site is at the interface of the two modules.</text>
</comment>
<comment type="PTM">
    <text evidence="10">N-glycosylated.</text>
</comment>
<comment type="PTM">
    <text evidence="12">Sumoylated. Sumoylation is required for targeting ot olfactory cilia.</text>
</comment>
<comment type="PTM">
    <text evidence="4">Rapidly phosphorylated after stimulation by odorants or forskolin. Phosphorylation by CaMK2 at Ser-1076 down-regulates enzyme activity.</text>
</comment>
<comment type="similarity">
    <text evidence="6">Belongs to the adenylyl cyclase class-4/guanylyl cyclase family.</text>
</comment>
<organism>
    <name type="scientific">Rattus norvegicus</name>
    <name type="common">Rat</name>
    <dbReference type="NCBI Taxonomy" id="10116"/>
    <lineage>
        <taxon>Eukaryota</taxon>
        <taxon>Metazoa</taxon>
        <taxon>Chordata</taxon>
        <taxon>Craniata</taxon>
        <taxon>Vertebrata</taxon>
        <taxon>Euteleostomi</taxon>
        <taxon>Mammalia</taxon>
        <taxon>Eutheria</taxon>
        <taxon>Euarchontoglires</taxon>
        <taxon>Glires</taxon>
        <taxon>Rodentia</taxon>
        <taxon>Myomorpha</taxon>
        <taxon>Muroidea</taxon>
        <taxon>Muridae</taxon>
        <taxon>Murinae</taxon>
        <taxon>Rattus</taxon>
    </lineage>
</organism>
<name>ADCY3_RAT</name>
<evidence type="ECO:0000250" key="1">
    <source>
        <dbReference type="UniProtKB" id="O60266"/>
    </source>
</evidence>
<evidence type="ECO:0000250" key="2">
    <source>
        <dbReference type="UniProtKB" id="P26769"/>
    </source>
</evidence>
<evidence type="ECO:0000250" key="3">
    <source>
        <dbReference type="UniProtKB" id="P30803"/>
    </source>
</evidence>
<evidence type="ECO:0000250" key="4">
    <source>
        <dbReference type="UniProtKB" id="Q8VHH7"/>
    </source>
</evidence>
<evidence type="ECO:0000255" key="5"/>
<evidence type="ECO:0000255" key="6">
    <source>
        <dbReference type="PROSITE-ProRule" id="PRU00099"/>
    </source>
</evidence>
<evidence type="ECO:0000256" key="7">
    <source>
        <dbReference type="SAM" id="MobiDB-lite"/>
    </source>
</evidence>
<evidence type="ECO:0000269" key="8">
    <source>
    </source>
</evidence>
<evidence type="ECO:0000269" key="9">
    <source>
    </source>
</evidence>
<evidence type="ECO:0000269" key="10">
    <source>
    </source>
</evidence>
<evidence type="ECO:0000269" key="11">
    <source>
    </source>
</evidence>
<evidence type="ECO:0000269" key="12">
    <source>
    </source>
</evidence>
<evidence type="ECO:0000303" key="13">
    <source>
    </source>
</evidence>
<evidence type="ECO:0000305" key="14"/>
<evidence type="ECO:0000312" key="15">
    <source>
        <dbReference type="RGD" id="71009"/>
    </source>
</evidence>
<keyword id="KW-0067">ATP-binding</keyword>
<keyword id="KW-0112">Calmodulin-binding</keyword>
<keyword id="KW-0115">cAMP biosynthesis</keyword>
<keyword id="KW-1003">Cell membrane</keyword>
<keyword id="KW-0966">Cell projection</keyword>
<keyword id="KW-0963">Cytoplasm</keyword>
<keyword id="KW-0325">Glycoprotein</keyword>
<keyword id="KW-0333">Golgi apparatus</keyword>
<keyword id="KW-1017">Isopeptide bond</keyword>
<keyword id="KW-0456">Lyase</keyword>
<keyword id="KW-0460">Magnesium</keyword>
<keyword id="KW-0464">Manganese</keyword>
<keyword id="KW-0472">Membrane</keyword>
<keyword id="KW-0479">Metal-binding</keyword>
<keyword id="KW-0547">Nucleotide-binding</keyword>
<keyword id="KW-0552">Olfaction</keyword>
<keyword id="KW-0597">Phosphoprotein</keyword>
<keyword id="KW-1185">Reference proteome</keyword>
<keyword id="KW-0677">Repeat</keyword>
<keyword id="KW-0716">Sensory transduction</keyword>
<keyword id="KW-0812">Transmembrane</keyword>
<keyword id="KW-1133">Transmembrane helix</keyword>
<keyword id="KW-0832">Ubl conjugation</keyword>
<protein>
    <recommendedName>
        <fullName>Adenylate cyclase type 3</fullName>
        <ecNumber evidence="9 10 11">4.6.1.1</ecNumber>
    </recommendedName>
    <alternativeName>
        <fullName>ATP pyrophosphate-lyase 3</fullName>
    </alternativeName>
    <alternativeName>
        <fullName evidence="13">Adenylate cyclase type III</fullName>
        <shortName>AC-III</shortName>
    </alternativeName>
    <alternativeName>
        <fullName>Adenylate cyclase, olfactive type</fullName>
    </alternativeName>
    <alternativeName>
        <fullName>Adenylyl cyclase 3</fullName>
        <shortName>AC3</shortName>
    </alternativeName>
</protein>
<gene>
    <name evidence="15" type="primary">Adcy3</name>
</gene>
<dbReference type="EC" id="4.6.1.1" evidence="9 10 11"/>
<dbReference type="EMBL" id="M55075">
    <property type="protein sequence ID" value="AAA40677.1"/>
    <property type="molecule type" value="mRNA"/>
</dbReference>
<dbReference type="PIR" id="A39833">
    <property type="entry name" value="A39833"/>
</dbReference>
<dbReference type="RefSeq" id="NP_570135.2">
    <property type="nucleotide sequence ID" value="NM_130779.2"/>
</dbReference>
<dbReference type="SMR" id="P21932"/>
<dbReference type="BioGRID" id="249093">
    <property type="interactions" value="1"/>
</dbReference>
<dbReference type="CORUM" id="P21932"/>
<dbReference type="FunCoup" id="P21932">
    <property type="interactions" value="3472"/>
</dbReference>
<dbReference type="STRING" id="10116.ENSRNOP00000005389"/>
<dbReference type="BindingDB" id="P21932"/>
<dbReference type="ChEMBL" id="CHEMBL2095179"/>
<dbReference type="DrugCentral" id="P21932"/>
<dbReference type="GlyCosmos" id="P21932">
    <property type="glycosylation" value="1 site, No reported glycans"/>
</dbReference>
<dbReference type="GlyGen" id="P21932">
    <property type="glycosylation" value="1 site"/>
</dbReference>
<dbReference type="PhosphoSitePlus" id="P21932"/>
<dbReference type="PaxDb" id="10116-ENSRNOP00000005389"/>
<dbReference type="GeneID" id="64508"/>
<dbReference type="KEGG" id="rno:64508"/>
<dbReference type="AGR" id="RGD:71009"/>
<dbReference type="CTD" id="109"/>
<dbReference type="RGD" id="71009">
    <property type="gene designation" value="Adcy3"/>
</dbReference>
<dbReference type="eggNOG" id="KOG3619">
    <property type="taxonomic scope" value="Eukaryota"/>
</dbReference>
<dbReference type="InParanoid" id="P21932"/>
<dbReference type="OrthoDB" id="10261550at2759"/>
<dbReference type="PhylomeDB" id="P21932"/>
<dbReference type="BRENDA" id="4.6.1.1">
    <property type="organism ID" value="5301"/>
</dbReference>
<dbReference type="Reactome" id="R-RNO-163615">
    <property type="pathway name" value="PKA activation"/>
</dbReference>
<dbReference type="Reactome" id="R-RNO-170660">
    <property type="pathway name" value="Adenylate cyclase activating pathway"/>
</dbReference>
<dbReference type="Reactome" id="R-RNO-170670">
    <property type="pathway name" value="Adenylate cyclase inhibitory pathway"/>
</dbReference>
<dbReference type="Reactome" id="R-RNO-418597">
    <property type="pathway name" value="G alpha (z) signalling events"/>
</dbReference>
<dbReference type="Reactome" id="R-RNO-5610787">
    <property type="pathway name" value="Hedgehog 'off' state"/>
</dbReference>
<dbReference type="PRO" id="PR:P21932"/>
<dbReference type="Proteomes" id="UP000002494">
    <property type="component" value="Unplaced"/>
</dbReference>
<dbReference type="GO" id="GO:0001669">
    <property type="term" value="C:acrosomal vesicle"/>
    <property type="evidence" value="ECO:0000314"/>
    <property type="project" value="RGD"/>
</dbReference>
<dbReference type="GO" id="GO:0090651">
    <property type="term" value="C:apical cytoplasm"/>
    <property type="evidence" value="ECO:0000314"/>
    <property type="project" value="RGD"/>
</dbReference>
<dbReference type="GO" id="GO:0060170">
    <property type="term" value="C:ciliary membrane"/>
    <property type="evidence" value="ECO:0000266"/>
    <property type="project" value="RGD"/>
</dbReference>
<dbReference type="GO" id="GO:0097538">
    <property type="term" value="C:ciliary necklace"/>
    <property type="evidence" value="ECO:0000314"/>
    <property type="project" value="RGD"/>
</dbReference>
<dbReference type="GO" id="GO:0005929">
    <property type="term" value="C:cilium"/>
    <property type="evidence" value="ECO:0000314"/>
    <property type="project" value="RGD"/>
</dbReference>
<dbReference type="GO" id="GO:0005737">
    <property type="term" value="C:cytoplasm"/>
    <property type="evidence" value="ECO:0000266"/>
    <property type="project" value="RGD"/>
</dbReference>
<dbReference type="GO" id="GO:0098788">
    <property type="term" value="C:dendritic knob"/>
    <property type="evidence" value="ECO:0000314"/>
    <property type="project" value="RGD"/>
</dbReference>
<dbReference type="GO" id="GO:0005794">
    <property type="term" value="C:Golgi apparatus"/>
    <property type="evidence" value="ECO:0000314"/>
    <property type="project" value="UniProtKB"/>
</dbReference>
<dbReference type="GO" id="GO:0016020">
    <property type="term" value="C:membrane"/>
    <property type="evidence" value="ECO:0000250"/>
    <property type="project" value="UniProtKB"/>
</dbReference>
<dbReference type="GO" id="GO:0043025">
    <property type="term" value="C:neuronal cell body"/>
    <property type="evidence" value="ECO:0000314"/>
    <property type="project" value="RGD"/>
</dbReference>
<dbReference type="GO" id="GO:0005634">
    <property type="term" value="C:nucleus"/>
    <property type="evidence" value="ECO:0000314"/>
    <property type="project" value="RGD"/>
</dbReference>
<dbReference type="GO" id="GO:0048471">
    <property type="term" value="C:perinuclear region of cytoplasm"/>
    <property type="evidence" value="ECO:0000314"/>
    <property type="project" value="RGD"/>
</dbReference>
<dbReference type="GO" id="GO:0005886">
    <property type="term" value="C:plasma membrane"/>
    <property type="evidence" value="ECO:0000314"/>
    <property type="project" value="UniProtKB"/>
</dbReference>
<dbReference type="GO" id="GO:0097225">
    <property type="term" value="C:sperm midpiece"/>
    <property type="evidence" value="ECO:0000314"/>
    <property type="project" value="RGD"/>
</dbReference>
<dbReference type="GO" id="GO:0004016">
    <property type="term" value="F:adenylate cyclase activity"/>
    <property type="evidence" value="ECO:0000314"/>
    <property type="project" value="UniProtKB"/>
</dbReference>
<dbReference type="GO" id="GO:0005524">
    <property type="term" value="F:ATP binding"/>
    <property type="evidence" value="ECO:0007669"/>
    <property type="project" value="UniProtKB-KW"/>
</dbReference>
<dbReference type="GO" id="GO:0008294">
    <property type="term" value="F:calcium- and calmodulin-responsive adenylate cyclase activity"/>
    <property type="evidence" value="ECO:0000314"/>
    <property type="project" value="RGD"/>
</dbReference>
<dbReference type="GO" id="GO:0005516">
    <property type="term" value="F:calmodulin binding"/>
    <property type="evidence" value="ECO:0007669"/>
    <property type="project" value="UniProtKB-KW"/>
</dbReference>
<dbReference type="GO" id="GO:0046872">
    <property type="term" value="F:metal ion binding"/>
    <property type="evidence" value="ECO:0007669"/>
    <property type="project" value="UniProtKB-KW"/>
</dbReference>
<dbReference type="GO" id="GO:0007340">
    <property type="term" value="P:acrosome reaction"/>
    <property type="evidence" value="ECO:0000250"/>
    <property type="project" value="UniProtKB"/>
</dbReference>
<dbReference type="GO" id="GO:0007189">
    <property type="term" value="P:adenylate cyclase-activating G protein-coupled receptor signaling pathway"/>
    <property type="evidence" value="ECO:0000250"/>
    <property type="project" value="UniProtKB"/>
</dbReference>
<dbReference type="GO" id="GO:0006171">
    <property type="term" value="P:cAMP biosynthetic process"/>
    <property type="evidence" value="ECO:0000314"/>
    <property type="project" value="UniProtKB"/>
</dbReference>
<dbReference type="GO" id="GO:1904322">
    <property type="term" value="P:cellular response to forskolin"/>
    <property type="evidence" value="ECO:0000314"/>
    <property type="project" value="UniProtKB"/>
</dbReference>
<dbReference type="GO" id="GO:0030317">
    <property type="term" value="P:flagellated sperm motility"/>
    <property type="evidence" value="ECO:0000250"/>
    <property type="project" value="UniProtKB"/>
</dbReference>
<dbReference type="GO" id="GO:0035556">
    <property type="term" value="P:intracellular signal transduction"/>
    <property type="evidence" value="ECO:0007669"/>
    <property type="project" value="InterPro"/>
</dbReference>
<dbReference type="GO" id="GO:0008355">
    <property type="term" value="P:olfactory learning"/>
    <property type="evidence" value="ECO:0000250"/>
    <property type="project" value="UniProtKB"/>
</dbReference>
<dbReference type="GO" id="GO:0007608">
    <property type="term" value="P:sensory perception of smell"/>
    <property type="evidence" value="ECO:0000266"/>
    <property type="project" value="RGD"/>
</dbReference>
<dbReference type="GO" id="GO:0007338">
    <property type="term" value="P:single fertilization"/>
    <property type="evidence" value="ECO:0000250"/>
    <property type="project" value="UniProtKB"/>
</dbReference>
<dbReference type="CDD" id="cd07302">
    <property type="entry name" value="CHD"/>
    <property type="match status" value="2"/>
</dbReference>
<dbReference type="FunFam" id="3.30.70.1230:FF:000006">
    <property type="entry name" value="Adenylate cyclase"/>
    <property type="match status" value="1"/>
</dbReference>
<dbReference type="FunFam" id="3.30.70.1230:FF:000009">
    <property type="entry name" value="Adenylate cyclase"/>
    <property type="match status" value="1"/>
</dbReference>
<dbReference type="Gene3D" id="3.30.70.1230">
    <property type="entry name" value="Nucleotide cyclase"/>
    <property type="match status" value="2"/>
</dbReference>
<dbReference type="InterPro" id="IPR001054">
    <property type="entry name" value="A/G_cyclase"/>
</dbReference>
<dbReference type="InterPro" id="IPR018297">
    <property type="entry name" value="A/G_cyclase_CS"/>
</dbReference>
<dbReference type="InterPro" id="IPR032628">
    <property type="entry name" value="AC_N"/>
</dbReference>
<dbReference type="InterPro" id="IPR030672">
    <property type="entry name" value="Adcy"/>
</dbReference>
<dbReference type="InterPro" id="IPR029787">
    <property type="entry name" value="Nucleotide_cyclase"/>
</dbReference>
<dbReference type="PANTHER" id="PTHR45627">
    <property type="entry name" value="ADENYLATE CYCLASE TYPE 1"/>
    <property type="match status" value="1"/>
</dbReference>
<dbReference type="PANTHER" id="PTHR45627:SF30">
    <property type="entry name" value="ADENYLATE CYCLASE TYPE 3"/>
    <property type="match status" value="1"/>
</dbReference>
<dbReference type="Pfam" id="PF16214">
    <property type="entry name" value="AC_N"/>
    <property type="match status" value="1"/>
</dbReference>
<dbReference type="Pfam" id="PF00211">
    <property type="entry name" value="Guanylate_cyc"/>
    <property type="match status" value="2"/>
</dbReference>
<dbReference type="PIRSF" id="PIRSF039050">
    <property type="entry name" value="Ade_cyc"/>
    <property type="match status" value="1"/>
</dbReference>
<dbReference type="SMART" id="SM00044">
    <property type="entry name" value="CYCc"/>
    <property type="match status" value="2"/>
</dbReference>
<dbReference type="SUPFAM" id="SSF55073">
    <property type="entry name" value="Nucleotide cyclase"/>
    <property type="match status" value="2"/>
</dbReference>
<dbReference type="PROSITE" id="PS00452">
    <property type="entry name" value="GUANYLATE_CYCLASE_1"/>
    <property type="match status" value="2"/>
</dbReference>
<dbReference type="PROSITE" id="PS50125">
    <property type="entry name" value="GUANYLATE_CYCLASE_2"/>
    <property type="match status" value="2"/>
</dbReference>
<sequence length="1144" mass="128936">MTEDQGFSDPEYSAEYSAEYSVSLPSDPDRGVGRTHEISVRNSGSCLCLPRFMRLTFVPESLENLYQTYFKRQRHETLLVLVVFAALFDCYVVVMCAVVFSSDKLAPLMVAGVGLVLDIILFVLCKKGLLPDRVSRKVVPYLLWLLITAQIFSYLGLNFSRAHAASDTVGWQAFFVFSFFITLPLSLSPIVIISVVSCVVHTLVLGVTVAQQQQDELEGMQLLREILANVFLYLCAIIVGIMSYYMADRKHRKAFLEARQSLEVKMNLEEQSQQQENLMLSILPKHVADEMLKDMKKDESQKDQQQFNTMYMYRHENVSILFADIVGFTQLSSACSAQELVKLLNELFARFDKLAAKYHQLRIKILGDCYYCICGLPDYREDHAVCSILMGLAMVEAISYVREKTKTGVDMRVGVHTGTVLGGVLGQKRWQYDVWSTDVTVANKMEAGGIPGRVHISQSTMDCLKGEFDVEPGDGGSRCDYLDEKGIETYLIIASKPEVKKTAQNGLNGSALPNGAPASKPSSPALIETKEPNGSAHASGSTSEEAEEQEAQADNPSFPNPRRRLRLQDLADRVVDASEDEHELNQLLNEALLERESAQVVKKRNTFLLTMRFMDPEMETRYSVEKEKQSGAAFSCSCVVLFCTAMVEILIDPWLMTNYVTFVVGEVLLLILTICSMAAIFPRAFPKKLVAFSSWIDRTRWARNTWAMLAIFILVMANVVDMLSCLQYYMGPYNVTTGIELDGGCMENPKYYNYVAVLSLIATIMLVQVSHMVKLTLMLLVTGAVTAINLYAWCPVFDEYDHKRFQEKDSPMVALEKMQVLSTPGLNGTDSRLPLVPSKYSMTVMMFVMMLSFYYFSRHVEKLARTLFLWKIEVHDQKERVYEMRRWNEALVTNMLPEHVARHFLGSKKRDEELYSQSYDEIGVMFASLPNFADFYTEESINNGGIECLRFLNEIISDFDSLLDNPKFRVITKIKTIGSTYMAASGVTPDVNTNGFTSSSKEEKSDKERWQHLADLADFALAMKDTLTNINNQSFNNFMLRIGMNKGGVLAGVIGARKPHYDIWGNTVNVASRMESTGVMGNIQVVEETQVILREYGFRFVRRGPIFVKGKGELLTFFLKGRDRPAAFPNGSSVTLPHQVVDNP</sequence>